<sequence length="1055" mass="120710">MLNENDIEQLTLQRLQSLGWEYRYGKDLPVHEGKFARGDLSGVVFVEQLREAVRKLNPQLPESAVDSVVKSATKSDIGDLVVRNQTFYKLLRDGVRVEYTQNGEQKIEMVRLVDFEHWGNNRFVAVNQLEIRSRKGGKRIPDIIGFVNGLPLVVFELKNPLRESADLLQAFNQFETYKDEIAELFVYNQALIISDGIVARLGSLSADFQRFTPWKVVDEKNKSARLYFDDELQSLLNGLMQPEDLLDYIRYFVLFERDSVGKTIKKIAAYHQYYGVNEAVDSTIWATSEKGDRRIGVMWHTQGSGKSISMLFYAGKLLAQPELKNPTIVVVTDRNDLDGQLFQTFSSGKDLIKQTPQQVEDRDQLRQLLAQNEVGGVFFTTIQKFALNEEESRFPILNERNNIIVISDEAHRSQYGFTQKLHNGKFQTGYARHLRDALPNASFIGFTGTPISLEDKDTQDVFGRYVSIYDLQDAVEDGATVPIVYDDARQIRLNKKDHDALFAEIDALLEEEPSTSLRLREKLLGSQERLIELAADFVQHFAKRNEVVDSKAMMVVSSRQICVDLYNQIIALHPEWHSDNINEGAIKIVMTGSASDTPEMQKHIYSKQEKQTLERRFKDPNDPLKVVIVRDMWLTGFDAPCCNTMYLDKPMKGHNLMQAIARVNRVFANKSRENGGLIVDYVGLAKELRAATQQYTNSTGKGQLAEDVQSVFFKMKEQLEFIRTLFATPIEGKTFDVQAALEKDNPNDLLMAIRFAANHILSLDQLSFDGKAHEQHWFNKKETEPRKKAFLKTAGLVKKGYMLCGTLAEVEPYNQEIAFYDAVRAILTKREQKGTGTNERQILLKKLVNQTVYSEGVIDLFDLLEKPQPQISLLSEEFLQTVKNSPTKNLWVSAMERYLASEIKVKSGTNLTLQKDFERRLKEALNQYHNHNLTVVEILDELFKMSQDFQERLALGKKLGLTKEELAFYEALSQNQSAKDLMGDEVLSKLAKEITETLRKSVTIDWQYKEAVRARIRLLVRRALQKYKYPPDKQEEAVTYVIKQAEEIAEDLTGL</sequence>
<feature type="chain" id="PRO_0000077262" description="Type I restriction enzyme HindI endonuclease subunit">
    <location>
        <begin position="1"/>
        <end position="1055"/>
    </location>
</feature>
<feature type="domain" description="Helicase ATP-binding" evidence="2">
    <location>
        <begin position="287"/>
        <end position="468"/>
    </location>
</feature>
<keyword id="KW-0067">ATP-binding</keyword>
<keyword id="KW-0238">DNA-binding</keyword>
<keyword id="KW-0255">Endonuclease</keyword>
<keyword id="KW-0378">Hydrolase</keyword>
<keyword id="KW-0540">Nuclease</keyword>
<keyword id="KW-0547">Nucleotide-binding</keyword>
<keyword id="KW-1185">Reference proteome</keyword>
<keyword id="KW-0680">Restriction system</keyword>
<proteinExistence type="inferred from homology"/>
<dbReference type="EC" id="3.1.21.3" evidence="1"/>
<dbReference type="EMBL" id="L42023">
    <property type="protein sequence ID" value="AAC22934.1"/>
    <property type="molecule type" value="Genomic_DNA"/>
</dbReference>
<dbReference type="PIR" id="F64114">
    <property type="entry name" value="F64114"/>
</dbReference>
<dbReference type="RefSeq" id="NP_439437.1">
    <property type="nucleotide sequence ID" value="NC_000907.1"/>
</dbReference>
<dbReference type="SMR" id="O05052"/>
<dbReference type="STRING" id="71421.HI_1285"/>
<dbReference type="REBASE" id="1149">
    <property type="entry name" value="HindI"/>
</dbReference>
<dbReference type="REBASE" id="155512">
    <property type="entry name" value="VscVS05ORF3158P"/>
</dbReference>
<dbReference type="REBASE" id="188608">
    <property type="entry name" value="AsoACEORF2359P"/>
</dbReference>
<dbReference type="REBASE" id="191851">
    <property type="entry name" value="Apa1447ORF2799P"/>
</dbReference>
<dbReference type="REBASE" id="191855">
    <property type="entry name" value="Apa1447ORF3031P"/>
</dbReference>
<dbReference type="REBASE" id="191867">
    <property type="entry name" value="Apa1342ORF2943P"/>
</dbReference>
<dbReference type="REBASE" id="191871">
    <property type="entry name" value="Apa1342ORF3157P"/>
</dbReference>
<dbReference type="REBASE" id="191887">
    <property type="entry name" value="Apa1468ORF3072P"/>
</dbReference>
<dbReference type="REBASE" id="203813">
    <property type="entry name" value="Lbr1106ORF30P"/>
</dbReference>
<dbReference type="REBASE" id="231749">
    <property type="entry name" value="Sen4839ORF3820P"/>
</dbReference>
<dbReference type="REBASE" id="290904">
    <property type="entry name" value="Msa27082ORF3559P"/>
</dbReference>
<dbReference type="DNASU" id="950228"/>
<dbReference type="EnsemblBacteria" id="AAC22934">
    <property type="protein sequence ID" value="AAC22934"/>
    <property type="gene ID" value="HI_1285"/>
</dbReference>
<dbReference type="KEGG" id="hin:HI_1285"/>
<dbReference type="PATRIC" id="fig|71421.8.peg.1337"/>
<dbReference type="eggNOG" id="COG0610">
    <property type="taxonomic scope" value="Bacteria"/>
</dbReference>
<dbReference type="HOGENOM" id="CLU_005762_1_0_6"/>
<dbReference type="OrthoDB" id="9758243at2"/>
<dbReference type="PhylomeDB" id="O05052"/>
<dbReference type="BioCyc" id="HINF71421:G1GJ1-1311-MONOMER"/>
<dbReference type="PRO" id="PR:O05052"/>
<dbReference type="Proteomes" id="UP000000579">
    <property type="component" value="Chromosome"/>
</dbReference>
<dbReference type="GO" id="GO:0005524">
    <property type="term" value="F:ATP binding"/>
    <property type="evidence" value="ECO:0007669"/>
    <property type="project" value="UniProtKB-KW"/>
</dbReference>
<dbReference type="GO" id="GO:0003677">
    <property type="term" value="F:DNA binding"/>
    <property type="evidence" value="ECO:0007669"/>
    <property type="project" value="UniProtKB-KW"/>
</dbReference>
<dbReference type="GO" id="GO:0009035">
    <property type="term" value="F:type I site-specific deoxyribonuclease activity"/>
    <property type="evidence" value="ECO:0007669"/>
    <property type="project" value="UniProtKB-EC"/>
</dbReference>
<dbReference type="GO" id="GO:0009307">
    <property type="term" value="P:DNA restriction-modification system"/>
    <property type="evidence" value="ECO:0007669"/>
    <property type="project" value="UniProtKB-KW"/>
</dbReference>
<dbReference type="CDD" id="cd18030">
    <property type="entry name" value="DEXHc_RE_I_HsdR"/>
    <property type="match status" value="1"/>
</dbReference>
<dbReference type="CDD" id="cd22332">
    <property type="entry name" value="HsdR_N"/>
    <property type="match status" value="1"/>
</dbReference>
<dbReference type="CDD" id="cd18800">
    <property type="entry name" value="SF2_C_EcoR124I-like"/>
    <property type="match status" value="1"/>
</dbReference>
<dbReference type="Gene3D" id="3.90.1570.50">
    <property type="match status" value="1"/>
</dbReference>
<dbReference type="Gene3D" id="3.40.50.300">
    <property type="entry name" value="P-loop containing nucleotide triphosphate hydrolases"/>
    <property type="match status" value="2"/>
</dbReference>
<dbReference type="InterPro" id="IPR014001">
    <property type="entry name" value="Helicase_ATP-bd"/>
</dbReference>
<dbReference type="InterPro" id="IPR055180">
    <property type="entry name" value="HsdR_RecA-like_helicase_dom_2"/>
</dbReference>
<dbReference type="InterPro" id="IPR027417">
    <property type="entry name" value="P-loop_NTPase"/>
</dbReference>
<dbReference type="InterPro" id="IPR007409">
    <property type="entry name" value="Restrct_endonuc_type1_HsdR_N"/>
</dbReference>
<dbReference type="InterPro" id="IPR004473">
    <property type="entry name" value="Restrct_endonuc_typeI_HsdR"/>
</dbReference>
<dbReference type="InterPro" id="IPR040980">
    <property type="entry name" value="SWI2_SNF2"/>
</dbReference>
<dbReference type="InterPro" id="IPR021810">
    <property type="entry name" value="T1RH-like_C"/>
</dbReference>
<dbReference type="InterPro" id="IPR051268">
    <property type="entry name" value="Type-I_R_enzyme_R_subunit"/>
</dbReference>
<dbReference type="NCBIfam" id="TIGR00348">
    <property type="entry name" value="hsdR"/>
    <property type="match status" value="1"/>
</dbReference>
<dbReference type="PANTHER" id="PTHR30195:SF15">
    <property type="entry name" value="TYPE I RESTRICTION ENZYME HINDI ENDONUCLEASE SUBUNIT"/>
    <property type="match status" value="1"/>
</dbReference>
<dbReference type="PANTHER" id="PTHR30195">
    <property type="entry name" value="TYPE I SITE-SPECIFIC DEOXYRIBONUCLEASE PROTEIN SUBUNIT M AND R"/>
    <property type="match status" value="1"/>
</dbReference>
<dbReference type="Pfam" id="PF04313">
    <property type="entry name" value="HSDR_N"/>
    <property type="match status" value="1"/>
</dbReference>
<dbReference type="Pfam" id="PF18766">
    <property type="entry name" value="SWI2_SNF2"/>
    <property type="match status" value="1"/>
</dbReference>
<dbReference type="Pfam" id="PF22679">
    <property type="entry name" value="T1R_D3-like"/>
    <property type="match status" value="1"/>
</dbReference>
<dbReference type="Pfam" id="PF11867">
    <property type="entry name" value="T1RH-like_C"/>
    <property type="match status" value="1"/>
</dbReference>
<dbReference type="SMART" id="SM00487">
    <property type="entry name" value="DEXDc"/>
    <property type="match status" value="1"/>
</dbReference>
<dbReference type="SUPFAM" id="SSF52540">
    <property type="entry name" value="P-loop containing nucleoside triphosphate hydrolases"/>
    <property type="match status" value="2"/>
</dbReference>
<dbReference type="PROSITE" id="PS51192">
    <property type="entry name" value="HELICASE_ATP_BIND_1"/>
    <property type="match status" value="1"/>
</dbReference>
<protein>
    <recommendedName>
        <fullName evidence="3">Type I restriction enzyme HindI endonuclease subunit</fullName>
        <shortName evidence="3">HindI</shortName>
        <shortName>R protein</shortName>
        <ecNumber evidence="1">3.1.21.3</ecNumber>
    </recommendedName>
    <alternativeName>
        <fullName>Type I restriction enzyme HindVIIP endonuclease subunit</fullName>
    </alternativeName>
</protein>
<name>T1RH_HAEIN</name>
<comment type="function">
    <text evidence="1 3">The restriction (R) subunit of a type I restriction enzyme that recognizes 5'-RAACN(5)TAG-3' and cleaves a random distance away. Subunit R is required for both nuclease and ATPase activities, but not for modification. After locating a non-methylated recognition site, the enzyme complex serves as a molecular motor that translocates DNA in an ATP-dependent manner until a collision occurs that triggers cleavage.</text>
</comment>
<comment type="catalytic activity">
    <reaction evidence="1">
        <text>Endonucleolytic cleavage of DNA to give random double-stranded fragments with terminal 5'-phosphates, ATP is simultaneously hydrolyzed.</text>
        <dbReference type="EC" id="3.1.21.3"/>
    </reaction>
</comment>
<comment type="subunit">
    <text evidence="1">The type I restriction/modification system is composed of three polypeptides R, M and S; the restriction enzyme has stoichiometry R(2)M(2)S(1) while the methyltransferase is M(2)S(1).</text>
</comment>
<comment type="miscellaneous">
    <text evidence="1">Type I restriction and modification enzymes are complex, multifunctional systems which require ATP, S-adenosyl methionine and magnesium as cofactors and, in addition to their endonucleolytic and methylase activities, are potent DNA-dependent ATPases.</text>
</comment>
<comment type="similarity">
    <text evidence="5">Belongs to the HsdR family.</text>
</comment>
<reference key="1">
    <citation type="journal article" date="1995" name="Science">
        <title>Whole-genome random sequencing and assembly of Haemophilus influenzae Rd.</title>
        <authorList>
            <person name="Fleischmann R.D."/>
            <person name="Adams M.D."/>
            <person name="White O."/>
            <person name="Clayton R.A."/>
            <person name="Kirkness E.F."/>
            <person name="Kerlavage A.R."/>
            <person name="Bult C.J."/>
            <person name="Tomb J.-F."/>
            <person name="Dougherty B.A."/>
            <person name="Merrick J.M."/>
            <person name="McKenney K."/>
            <person name="Sutton G.G."/>
            <person name="FitzHugh W."/>
            <person name="Fields C.A."/>
            <person name="Gocayne J.D."/>
            <person name="Scott J.D."/>
            <person name="Shirley R."/>
            <person name="Liu L.-I."/>
            <person name="Glodek A."/>
            <person name="Kelley J.M."/>
            <person name="Weidman J.F."/>
            <person name="Phillips C.A."/>
            <person name="Spriggs T."/>
            <person name="Hedblom E."/>
            <person name="Cotton M.D."/>
            <person name="Utterback T.R."/>
            <person name="Hanna M.C."/>
            <person name="Nguyen D.T."/>
            <person name="Saudek D.M."/>
            <person name="Brandon R.C."/>
            <person name="Fine L.D."/>
            <person name="Fritchman J.L."/>
            <person name="Fuhrmann J.L."/>
            <person name="Geoghagen N.S.M."/>
            <person name="Gnehm C.L."/>
            <person name="McDonald L.A."/>
            <person name="Small K.V."/>
            <person name="Fraser C.M."/>
            <person name="Smith H.O."/>
            <person name="Venter J.C."/>
        </authorList>
    </citation>
    <scope>NUCLEOTIDE SEQUENCE [LARGE SCALE GENOMIC DNA]</scope>
    <source>
        <strain>ATCC 51907 / DSM 11121 / KW20 / Rd</strain>
    </source>
</reference>
<reference key="2">
    <citation type="journal article" date="2003" name="Nucleic Acids Res.">
        <title>A nomenclature for restriction enzymes, DNA methyltransferases, homing endonucleases and their genes.</title>
        <authorList>
            <person name="Roberts R.J."/>
            <person name="Belfort M."/>
            <person name="Bestor T."/>
            <person name="Bhagwat A.S."/>
            <person name="Bickle T.A."/>
            <person name="Bitinaite J."/>
            <person name="Blumenthal R.M."/>
            <person name="Degtyarev S.K."/>
            <person name="Dryden D.T."/>
            <person name="Dybvig K."/>
            <person name="Firman K."/>
            <person name="Gromova E.S."/>
            <person name="Gumport R.I."/>
            <person name="Halford S.E."/>
            <person name="Hattman S."/>
            <person name="Heitman J."/>
            <person name="Hornby D.P."/>
            <person name="Janulaitis A."/>
            <person name="Jeltsch A."/>
            <person name="Josephsen J."/>
            <person name="Kiss A."/>
            <person name="Klaenhammer T.R."/>
            <person name="Kobayashi I."/>
            <person name="Kong H."/>
            <person name="Krueger D.H."/>
            <person name="Lacks S."/>
            <person name="Marinus M.G."/>
            <person name="Miyahara M."/>
            <person name="Morgan R.D."/>
            <person name="Murray N.E."/>
            <person name="Nagaraja V."/>
            <person name="Piekarowicz A."/>
            <person name="Pingoud A."/>
            <person name="Raleigh E."/>
            <person name="Rao D.N."/>
            <person name="Reich N."/>
            <person name="Repin V.E."/>
            <person name="Selker E.U."/>
            <person name="Shaw P.C."/>
            <person name="Stein D.C."/>
            <person name="Stoddard B.L."/>
            <person name="Szybalski W."/>
            <person name="Trautner T.A."/>
            <person name="Van Etten J.L."/>
            <person name="Vitor J.M."/>
            <person name="Wilson G.G."/>
            <person name="Xu S.Y."/>
        </authorList>
    </citation>
    <scope>NOMENCLATURE</scope>
</reference>
<evidence type="ECO:0000250" key="1">
    <source>
        <dbReference type="UniProtKB" id="P08956"/>
    </source>
</evidence>
<evidence type="ECO:0000255" key="2">
    <source>
        <dbReference type="PROSITE-ProRule" id="PRU00541"/>
    </source>
</evidence>
<evidence type="ECO:0000303" key="3">
    <source>
    </source>
</evidence>
<evidence type="ECO:0000303" key="4">
    <source>
    </source>
</evidence>
<evidence type="ECO:0000305" key="5"/>
<organism>
    <name type="scientific">Haemophilus influenzae (strain ATCC 51907 / DSM 11121 / KW20 / Rd)</name>
    <dbReference type="NCBI Taxonomy" id="71421"/>
    <lineage>
        <taxon>Bacteria</taxon>
        <taxon>Pseudomonadati</taxon>
        <taxon>Pseudomonadota</taxon>
        <taxon>Gammaproteobacteria</taxon>
        <taxon>Pasteurellales</taxon>
        <taxon>Pasteurellaceae</taxon>
        <taxon>Haemophilus</taxon>
    </lineage>
</organism>
<gene>
    <name evidence="4" type="primary">hsdR</name>
    <name type="ordered locus">HI_1285</name>
</gene>
<accession>O05052</accession>